<keyword id="KW-0067">ATP-binding</keyword>
<keyword id="KW-0963">Cytoplasm</keyword>
<keyword id="KW-0418">Kinase</keyword>
<keyword id="KW-0520">NAD</keyword>
<keyword id="KW-0521">NADP</keyword>
<keyword id="KW-0547">Nucleotide-binding</keyword>
<keyword id="KW-0808">Transferase</keyword>
<comment type="function">
    <text evidence="1">Involved in the regulation of the intracellular balance of NAD and NADP, and is a key enzyme in the biosynthesis of NADP. Catalyzes specifically the phosphorylation on 2'-hydroxyl of the adenosine moiety of NAD to yield NADP.</text>
</comment>
<comment type="catalytic activity">
    <reaction evidence="1">
        <text>NAD(+) + ATP = ADP + NADP(+) + H(+)</text>
        <dbReference type="Rhea" id="RHEA:18629"/>
        <dbReference type="ChEBI" id="CHEBI:15378"/>
        <dbReference type="ChEBI" id="CHEBI:30616"/>
        <dbReference type="ChEBI" id="CHEBI:57540"/>
        <dbReference type="ChEBI" id="CHEBI:58349"/>
        <dbReference type="ChEBI" id="CHEBI:456216"/>
        <dbReference type="EC" id="2.7.1.23"/>
    </reaction>
</comment>
<comment type="cofactor">
    <cofactor evidence="1">
        <name>a divalent metal cation</name>
        <dbReference type="ChEBI" id="CHEBI:60240"/>
    </cofactor>
</comment>
<comment type="subcellular location">
    <subcellularLocation>
        <location evidence="1">Cytoplasm</location>
    </subcellularLocation>
</comment>
<comment type="similarity">
    <text evidence="1">Belongs to the NAD kinase family.</text>
</comment>
<sequence>MKNTGKRIDLIANRKPQXQRVLYELRDRLKRNQFILNXTNPDIVISIGGDGMLLSAFHKYENQLDKVRFIGLHTGHLGFYTDYRDFELDKLVTNLQLDTGARVSYPVLNVKVFLENGEVKIFRALNEASIRRSDRTMVADIVINGVPFERFRGDGLTVSTPTGSTAYNKSLGGAVLHPTIEALQLTEIASLNNRVYRTLGSSIIVPKKDKIELIPTRNDYHTISVDNSVYSFRNIERIEYQIDHHKIHFVATPSHTSFWNRVKDAFIGEVDE</sequence>
<evidence type="ECO:0000255" key="1">
    <source>
        <dbReference type="HAMAP-Rule" id="MF_00361"/>
    </source>
</evidence>
<gene>
    <name evidence="1" type="primary">nadK</name>
    <name type="ordered locus">SPG_1018</name>
</gene>
<dbReference type="EC" id="2.7.1.23" evidence="1"/>
<dbReference type="EMBL" id="CP001015">
    <property type="protein sequence ID" value="ACF55804.1"/>
    <property type="molecule type" value="Genomic_DNA"/>
</dbReference>
<dbReference type="KEGG" id="spx:SPG_1018"/>
<dbReference type="HOGENOM" id="CLU_008831_0_3_9"/>
<dbReference type="GO" id="GO:0005737">
    <property type="term" value="C:cytoplasm"/>
    <property type="evidence" value="ECO:0007669"/>
    <property type="project" value="UniProtKB-SubCell"/>
</dbReference>
<dbReference type="GO" id="GO:0005524">
    <property type="term" value="F:ATP binding"/>
    <property type="evidence" value="ECO:0007669"/>
    <property type="project" value="UniProtKB-KW"/>
</dbReference>
<dbReference type="GO" id="GO:0046872">
    <property type="term" value="F:metal ion binding"/>
    <property type="evidence" value="ECO:0007669"/>
    <property type="project" value="UniProtKB-UniRule"/>
</dbReference>
<dbReference type="GO" id="GO:0051287">
    <property type="term" value="F:NAD binding"/>
    <property type="evidence" value="ECO:0007669"/>
    <property type="project" value="UniProtKB-ARBA"/>
</dbReference>
<dbReference type="GO" id="GO:0003951">
    <property type="term" value="F:NAD+ kinase activity"/>
    <property type="evidence" value="ECO:0007669"/>
    <property type="project" value="UniProtKB-UniRule"/>
</dbReference>
<dbReference type="GO" id="GO:0019674">
    <property type="term" value="P:NAD metabolic process"/>
    <property type="evidence" value="ECO:0007669"/>
    <property type="project" value="InterPro"/>
</dbReference>
<dbReference type="GO" id="GO:0006741">
    <property type="term" value="P:NADP biosynthetic process"/>
    <property type="evidence" value="ECO:0007669"/>
    <property type="project" value="UniProtKB-UniRule"/>
</dbReference>
<dbReference type="FunFam" id="2.60.200.30:FF:000002">
    <property type="entry name" value="NAD kinase"/>
    <property type="match status" value="1"/>
</dbReference>
<dbReference type="Gene3D" id="3.40.50.10330">
    <property type="entry name" value="Probable inorganic polyphosphate/atp-NAD kinase, domain 1"/>
    <property type="match status" value="1"/>
</dbReference>
<dbReference type="Gene3D" id="2.60.200.30">
    <property type="entry name" value="Probable inorganic polyphosphate/atp-NAD kinase, domain 2"/>
    <property type="match status" value="1"/>
</dbReference>
<dbReference type="HAMAP" id="MF_00361">
    <property type="entry name" value="NAD_kinase"/>
    <property type="match status" value="1"/>
</dbReference>
<dbReference type="InterPro" id="IPR017438">
    <property type="entry name" value="ATP-NAD_kinase_N"/>
</dbReference>
<dbReference type="InterPro" id="IPR017437">
    <property type="entry name" value="ATP-NAD_kinase_PpnK-typ_C"/>
</dbReference>
<dbReference type="InterPro" id="IPR016064">
    <property type="entry name" value="NAD/diacylglycerol_kinase_sf"/>
</dbReference>
<dbReference type="InterPro" id="IPR002504">
    <property type="entry name" value="NADK"/>
</dbReference>
<dbReference type="NCBIfam" id="NF003424">
    <property type="entry name" value="PRK04885.1"/>
    <property type="match status" value="1"/>
</dbReference>
<dbReference type="PANTHER" id="PTHR20275">
    <property type="entry name" value="NAD KINASE"/>
    <property type="match status" value="1"/>
</dbReference>
<dbReference type="PANTHER" id="PTHR20275:SF0">
    <property type="entry name" value="NAD KINASE"/>
    <property type="match status" value="1"/>
</dbReference>
<dbReference type="Pfam" id="PF20143">
    <property type="entry name" value="NAD_kinase_C"/>
    <property type="match status" value="1"/>
</dbReference>
<dbReference type="SUPFAM" id="SSF111331">
    <property type="entry name" value="NAD kinase/diacylglycerol kinase-like"/>
    <property type="match status" value="1"/>
</dbReference>
<protein>
    <recommendedName>
        <fullName evidence="1">NAD kinase</fullName>
        <ecNumber evidence="1">2.7.1.23</ecNumber>
    </recommendedName>
    <alternativeName>
        <fullName evidence="1">ATP-dependent NAD kinase</fullName>
    </alternativeName>
</protein>
<organism>
    <name type="scientific">Streptococcus pneumoniae serotype 19F (strain G54)</name>
    <dbReference type="NCBI Taxonomy" id="512566"/>
    <lineage>
        <taxon>Bacteria</taxon>
        <taxon>Bacillati</taxon>
        <taxon>Bacillota</taxon>
        <taxon>Bacilli</taxon>
        <taxon>Lactobacillales</taxon>
        <taxon>Streptococcaceae</taxon>
        <taxon>Streptococcus</taxon>
    </lineage>
</organism>
<accession>B5E4L2</accession>
<proteinExistence type="inferred from homology"/>
<reference key="1">
    <citation type="journal article" date="2001" name="Microb. Drug Resist.">
        <title>Annotated draft genomic sequence from a Streptococcus pneumoniae type 19F clinical isolate.</title>
        <authorList>
            <person name="Dopazo J."/>
            <person name="Mendoza A."/>
            <person name="Herrero J."/>
            <person name="Caldara F."/>
            <person name="Humbert Y."/>
            <person name="Friedli L."/>
            <person name="Guerrier M."/>
            <person name="Grand-Schenk E."/>
            <person name="Gandin C."/>
            <person name="de Francesco M."/>
            <person name="Polissi A."/>
            <person name="Buell G."/>
            <person name="Feger G."/>
            <person name="Garcia E."/>
            <person name="Peitsch M."/>
            <person name="Garcia-Bustos J.F."/>
        </authorList>
    </citation>
    <scope>NUCLEOTIDE SEQUENCE [LARGE SCALE GENOMIC DNA]</scope>
    <source>
        <strain>G54</strain>
    </source>
</reference>
<reference key="2">
    <citation type="submission" date="2008-03" db="EMBL/GenBank/DDBJ databases">
        <title>Pneumococcal beta glucoside metabolism investigated by whole genome comparison.</title>
        <authorList>
            <person name="Mulas L."/>
            <person name="Trappetti C."/>
            <person name="Hakenbeck R."/>
            <person name="Iannelli F."/>
            <person name="Pozzi G."/>
            <person name="Davidsen T.M."/>
            <person name="Tettelin H."/>
            <person name="Oggioni M."/>
        </authorList>
    </citation>
    <scope>NUCLEOTIDE SEQUENCE [LARGE SCALE GENOMIC DNA]</scope>
    <source>
        <strain>G54</strain>
    </source>
</reference>
<feature type="chain" id="PRO_1000120890" description="NAD kinase">
    <location>
        <begin position="1"/>
        <end position="272"/>
    </location>
</feature>
<feature type="active site" description="Proton acceptor" evidence="1">
    <location>
        <position position="50"/>
    </location>
</feature>
<feature type="binding site" evidence="1">
    <location>
        <begin position="50"/>
        <end position="51"/>
    </location>
    <ligand>
        <name>NAD(+)</name>
        <dbReference type="ChEBI" id="CHEBI:57540"/>
    </ligand>
</feature>
<feature type="binding site" evidence="1">
    <location>
        <begin position="126"/>
        <end position="127"/>
    </location>
    <ligand>
        <name>NAD(+)</name>
        <dbReference type="ChEBI" id="CHEBI:57540"/>
    </ligand>
</feature>
<feature type="binding site" evidence="1">
    <location>
        <position position="152"/>
    </location>
    <ligand>
        <name>NAD(+)</name>
        <dbReference type="ChEBI" id="CHEBI:57540"/>
    </ligand>
</feature>
<feature type="binding site" evidence="1">
    <location>
        <position position="154"/>
    </location>
    <ligand>
        <name>NAD(+)</name>
        <dbReference type="ChEBI" id="CHEBI:57540"/>
    </ligand>
</feature>
<feature type="binding site" evidence="1">
    <location>
        <begin position="165"/>
        <end position="170"/>
    </location>
    <ligand>
        <name>NAD(+)</name>
        <dbReference type="ChEBI" id="CHEBI:57540"/>
    </ligand>
</feature>
<feature type="binding site" evidence="1">
    <location>
        <position position="189"/>
    </location>
    <ligand>
        <name>NAD(+)</name>
        <dbReference type="ChEBI" id="CHEBI:57540"/>
    </ligand>
</feature>
<name>NADK_STRP4</name>